<proteinExistence type="inferred from homology"/>
<keyword id="KW-0963">Cytoplasm</keyword>
<keyword id="KW-0560">Oxidoreductase</keyword>
<keyword id="KW-1185">Reference proteome</keyword>
<organism>
    <name type="scientific">Escherichia coli O1:K1 / APEC</name>
    <dbReference type="NCBI Taxonomy" id="405955"/>
    <lineage>
        <taxon>Bacteria</taxon>
        <taxon>Pseudomonadati</taxon>
        <taxon>Pseudomonadota</taxon>
        <taxon>Gammaproteobacteria</taxon>
        <taxon>Enterobacterales</taxon>
        <taxon>Enterobacteriaceae</taxon>
        <taxon>Escherichia</taxon>
    </lineage>
</organism>
<reference key="1">
    <citation type="journal article" date="2007" name="J. Bacteriol.">
        <title>The genome sequence of avian pathogenic Escherichia coli strain O1:K1:H7 shares strong similarities with human extraintestinal pathogenic E. coli genomes.</title>
        <authorList>
            <person name="Johnson T.J."/>
            <person name="Kariyawasam S."/>
            <person name="Wannemuehler Y."/>
            <person name="Mangiamele P."/>
            <person name="Johnson S.J."/>
            <person name="Doetkott C."/>
            <person name="Skyberg J.A."/>
            <person name="Lynne A.M."/>
            <person name="Johnson J.R."/>
            <person name="Nolan L.K."/>
        </authorList>
    </citation>
    <scope>NUCLEOTIDE SEQUENCE [LARGE SCALE GENOMIC DNA]</scope>
</reference>
<accession>A1AEU8</accession>
<comment type="function">
    <text evidence="1">Catalyzes the formation of sulfite from phosphoadenosine 5'-phosphosulfate (PAPS) using thioredoxin as an electron donor.</text>
</comment>
<comment type="catalytic activity">
    <reaction evidence="1">
        <text>[thioredoxin]-disulfide + sulfite + adenosine 3',5'-bisphosphate + 2 H(+) = [thioredoxin]-dithiol + 3'-phosphoadenylyl sulfate</text>
        <dbReference type="Rhea" id="RHEA:11724"/>
        <dbReference type="Rhea" id="RHEA-COMP:10698"/>
        <dbReference type="Rhea" id="RHEA-COMP:10700"/>
        <dbReference type="ChEBI" id="CHEBI:15378"/>
        <dbReference type="ChEBI" id="CHEBI:17359"/>
        <dbReference type="ChEBI" id="CHEBI:29950"/>
        <dbReference type="ChEBI" id="CHEBI:50058"/>
        <dbReference type="ChEBI" id="CHEBI:58339"/>
        <dbReference type="ChEBI" id="CHEBI:58343"/>
        <dbReference type="EC" id="1.8.4.8"/>
    </reaction>
</comment>
<comment type="pathway">
    <text evidence="1">Sulfur metabolism; hydrogen sulfide biosynthesis; sulfite from sulfate: step 3/3.</text>
</comment>
<comment type="subcellular location">
    <subcellularLocation>
        <location evidence="1">Cytoplasm</location>
    </subcellularLocation>
</comment>
<comment type="similarity">
    <text evidence="1">Belongs to the PAPS reductase family. CysH subfamily.</text>
</comment>
<sequence>MSKLDLNALNELPKVDRILALAETNAQLEKLDAEGRVAWALDNLPGEYVLSSSFGIQAAVSLHLVNQIRPDIPVILTDTGYLFPETYRFIDELTDKLKLNLKVYRATESAAWQEARYGKLWEQGVEGIEKYNDINKVEPMNRALKELNVQTWFAGLRREQSGSRANLPVLAIQRGVFKVLPIIDWDNRTIYQYLQKHGLKYHPLWDEGYLSVGDTHTTRKWEPGMAEEETRFFGLKRECGLHEG</sequence>
<protein>
    <recommendedName>
        <fullName evidence="1">Phosphoadenosine 5'-phosphosulfate reductase</fullName>
        <shortName evidence="1">PAPS reductase</shortName>
        <ecNumber evidence="1">1.8.4.8</ecNumber>
    </recommendedName>
    <alternativeName>
        <fullName evidence="1">3'-phosphoadenylylsulfate reductase</fullName>
    </alternativeName>
    <alternativeName>
        <fullName evidence="1">PAPS reductase, thioredoxin dependent</fullName>
    </alternativeName>
    <alternativeName>
        <fullName evidence="1">PAPS sulfotransferase</fullName>
    </alternativeName>
    <alternativeName>
        <fullName evidence="1">PAdoPS reductase</fullName>
    </alternativeName>
</protein>
<name>CYSH_ECOK1</name>
<dbReference type="EC" id="1.8.4.8" evidence="1"/>
<dbReference type="EMBL" id="CP000468">
    <property type="protein sequence ID" value="ABJ02188.1"/>
    <property type="molecule type" value="Genomic_DNA"/>
</dbReference>
<dbReference type="RefSeq" id="WP_000039865.1">
    <property type="nucleotide sequence ID" value="NZ_CADILS010000024.1"/>
</dbReference>
<dbReference type="SMR" id="A1AEU8"/>
<dbReference type="KEGG" id="ecv:APECO1_3770"/>
<dbReference type="HOGENOM" id="CLU_044089_3_0_6"/>
<dbReference type="UniPathway" id="UPA00140">
    <property type="reaction ID" value="UER00206"/>
</dbReference>
<dbReference type="Proteomes" id="UP000008216">
    <property type="component" value="Chromosome"/>
</dbReference>
<dbReference type="GO" id="GO:0005737">
    <property type="term" value="C:cytoplasm"/>
    <property type="evidence" value="ECO:0007669"/>
    <property type="project" value="UniProtKB-SubCell"/>
</dbReference>
<dbReference type="GO" id="GO:0004604">
    <property type="term" value="F:phosphoadenylyl-sulfate reductase (thioredoxin) activity"/>
    <property type="evidence" value="ECO:0007669"/>
    <property type="project" value="UniProtKB-UniRule"/>
</dbReference>
<dbReference type="GO" id="GO:0070814">
    <property type="term" value="P:hydrogen sulfide biosynthetic process"/>
    <property type="evidence" value="ECO:0007669"/>
    <property type="project" value="UniProtKB-UniRule"/>
</dbReference>
<dbReference type="GO" id="GO:0019379">
    <property type="term" value="P:sulfate assimilation, phosphoadenylyl sulfate reduction by phosphoadenylyl-sulfate reductase (thioredoxin)"/>
    <property type="evidence" value="ECO:0007669"/>
    <property type="project" value="UniProtKB-UniRule"/>
</dbReference>
<dbReference type="CDD" id="cd23945">
    <property type="entry name" value="PAPS_reductase"/>
    <property type="match status" value="1"/>
</dbReference>
<dbReference type="FunFam" id="3.40.50.620:FF:000043">
    <property type="entry name" value="Phosphoadenosine phosphosulfate reductase"/>
    <property type="match status" value="1"/>
</dbReference>
<dbReference type="Gene3D" id="3.40.50.620">
    <property type="entry name" value="HUPs"/>
    <property type="match status" value="1"/>
</dbReference>
<dbReference type="HAMAP" id="MF_00063">
    <property type="entry name" value="CysH"/>
    <property type="match status" value="1"/>
</dbReference>
<dbReference type="InterPro" id="IPR004511">
    <property type="entry name" value="PAPS/APS_Rdtase"/>
</dbReference>
<dbReference type="InterPro" id="IPR002500">
    <property type="entry name" value="PAPS_reduct_dom"/>
</dbReference>
<dbReference type="InterPro" id="IPR011800">
    <property type="entry name" value="PAPS_reductase_CysH"/>
</dbReference>
<dbReference type="InterPro" id="IPR014729">
    <property type="entry name" value="Rossmann-like_a/b/a_fold"/>
</dbReference>
<dbReference type="NCBIfam" id="TIGR00434">
    <property type="entry name" value="cysH"/>
    <property type="match status" value="1"/>
</dbReference>
<dbReference type="NCBIfam" id="TIGR02057">
    <property type="entry name" value="PAPS_reductase"/>
    <property type="match status" value="1"/>
</dbReference>
<dbReference type="NCBIfam" id="NF002537">
    <property type="entry name" value="PRK02090.1"/>
    <property type="match status" value="1"/>
</dbReference>
<dbReference type="PANTHER" id="PTHR46509">
    <property type="entry name" value="PHOSPHOADENOSINE PHOSPHOSULFATE REDUCTASE"/>
    <property type="match status" value="1"/>
</dbReference>
<dbReference type="PANTHER" id="PTHR46509:SF1">
    <property type="entry name" value="PHOSPHOADENOSINE PHOSPHOSULFATE REDUCTASE"/>
    <property type="match status" value="1"/>
</dbReference>
<dbReference type="Pfam" id="PF01507">
    <property type="entry name" value="PAPS_reduct"/>
    <property type="match status" value="1"/>
</dbReference>
<dbReference type="PIRSF" id="PIRSF000857">
    <property type="entry name" value="PAPS_reductase"/>
    <property type="match status" value="1"/>
</dbReference>
<dbReference type="SUPFAM" id="SSF52402">
    <property type="entry name" value="Adenine nucleotide alpha hydrolases-like"/>
    <property type="match status" value="1"/>
</dbReference>
<evidence type="ECO:0000255" key="1">
    <source>
        <dbReference type="HAMAP-Rule" id="MF_00063"/>
    </source>
</evidence>
<feature type="chain" id="PRO_1000008921" description="Phosphoadenosine 5'-phosphosulfate reductase">
    <location>
        <begin position="1"/>
        <end position="244"/>
    </location>
</feature>
<feature type="active site" description="Nucleophile; cysteine thiosulfonate intermediate" evidence="1">
    <location>
        <position position="239"/>
    </location>
</feature>
<gene>
    <name evidence="1" type="primary">cysH</name>
    <name type="ordered locus">Ecok1_26940</name>
    <name type="ORF">APECO1_3770</name>
</gene>